<name>NRFA_HAEI8</name>
<organism>
    <name type="scientific">Haemophilus influenzae (strain 86-028NP)</name>
    <dbReference type="NCBI Taxonomy" id="281310"/>
    <lineage>
        <taxon>Bacteria</taxon>
        <taxon>Pseudomonadati</taxon>
        <taxon>Pseudomonadota</taxon>
        <taxon>Gammaproteobacteria</taxon>
        <taxon>Pasteurellales</taxon>
        <taxon>Pasteurellaceae</taxon>
        <taxon>Haemophilus</taxon>
    </lineage>
</organism>
<gene>
    <name evidence="1" type="primary">nrfA</name>
    <name type="ordered locus">NTHI1230</name>
</gene>
<protein>
    <recommendedName>
        <fullName evidence="1">Cytochrome c-552</fullName>
        <ecNumber evidence="1">1.7.2.2</ecNumber>
    </recommendedName>
    <alternativeName>
        <fullName evidence="1">Ammonia-forming cytochrome c nitrite reductase</fullName>
        <shortName evidence="1">Cytochrome c nitrite reductase</shortName>
    </alternativeName>
</protein>
<comment type="function">
    <text evidence="1">Catalyzes the reduction of nitrite to ammonia, consuming six electrons in the process.</text>
</comment>
<comment type="catalytic activity">
    <reaction evidence="1">
        <text>6 Fe(III)-[cytochrome c] + NH4(+) + 2 H2O = 6 Fe(II)-[cytochrome c] + nitrite + 8 H(+)</text>
        <dbReference type="Rhea" id="RHEA:13089"/>
        <dbReference type="Rhea" id="RHEA-COMP:10350"/>
        <dbReference type="Rhea" id="RHEA-COMP:14399"/>
        <dbReference type="ChEBI" id="CHEBI:15377"/>
        <dbReference type="ChEBI" id="CHEBI:15378"/>
        <dbReference type="ChEBI" id="CHEBI:16301"/>
        <dbReference type="ChEBI" id="CHEBI:28938"/>
        <dbReference type="ChEBI" id="CHEBI:29033"/>
        <dbReference type="ChEBI" id="CHEBI:29034"/>
        <dbReference type="EC" id="1.7.2.2"/>
    </reaction>
</comment>
<comment type="cofactor">
    <cofactor evidence="1">
        <name>Ca(2+)</name>
        <dbReference type="ChEBI" id="CHEBI:29108"/>
    </cofactor>
    <text evidence="1">Binds 1 Ca(2+) ion per monomer.</text>
</comment>
<comment type="cofactor">
    <cofactor evidence="1">
        <name>heme c</name>
        <dbReference type="ChEBI" id="CHEBI:61717"/>
    </cofactor>
    <text evidence="1">Binds 5 heme c groups covalently per monomer.</text>
</comment>
<comment type="pathway">
    <text evidence="1">Nitrogen metabolism; nitrate reduction (assimilation).</text>
</comment>
<comment type="subcellular location">
    <subcellularLocation>
        <location evidence="1">Periplasm</location>
    </subcellularLocation>
</comment>
<comment type="similarity">
    <text evidence="1">Belongs to the cytochrome c-552 family.</text>
</comment>
<keyword id="KW-0106">Calcium</keyword>
<keyword id="KW-0249">Electron transport</keyword>
<keyword id="KW-0349">Heme</keyword>
<keyword id="KW-0408">Iron</keyword>
<keyword id="KW-0479">Metal-binding</keyword>
<keyword id="KW-0560">Oxidoreductase</keyword>
<keyword id="KW-0574">Periplasm</keyword>
<keyword id="KW-0732">Signal</keyword>
<keyword id="KW-0813">Transport</keyword>
<dbReference type="EC" id="1.7.2.2" evidence="1"/>
<dbReference type="EMBL" id="CP000057">
    <property type="protein sequence ID" value="AAX88079.1"/>
    <property type="molecule type" value="Genomic_DNA"/>
</dbReference>
<dbReference type="SMR" id="Q4QLL8"/>
<dbReference type="KEGG" id="hit:NTHI1230"/>
<dbReference type="HOGENOM" id="CLU_035040_1_0_6"/>
<dbReference type="UniPathway" id="UPA00653"/>
<dbReference type="Proteomes" id="UP000002525">
    <property type="component" value="Chromosome"/>
</dbReference>
<dbReference type="GO" id="GO:0030288">
    <property type="term" value="C:outer membrane-bounded periplasmic space"/>
    <property type="evidence" value="ECO:0007669"/>
    <property type="project" value="TreeGrafter"/>
</dbReference>
<dbReference type="GO" id="GO:0005509">
    <property type="term" value="F:calcium ion binding"/>
    <property type="evidence" value="ECO:0007669"/>
    <property type="project" value="UniProtKB-UniRule"/>
</dbReference>
<dbReference type="GO" id="GO:0020037">
    <property type="term" value="F:heme binding"/>
    <property type="evidence" value="ECO:0007669"/>
    <property type="project" value="InterPro"/>
</dbReference>
<dbReference type="GO" id="GO:0005506">
    <property type="term" value="F:iron ion binding"/>
    <property type="evidence" value="ECO:0007669"/>
    <property type="project" value="UniProtKB-UniRule"/>
</dbReference>
<dbReference type="GO" id="GO:0042279">
    <property type="term" value="F:nitrite reductase (cytochrome, ammonia-forming) activity"/>
    <property type="evidence" value="ECO:0007669"/>
    <property type="project" value="UniProtKB-UniRule"/>
</dbReference>
<dbReference type="GO" id="GO:0019645">
    <property type="term" value="P:anaerobic electron transport chain"/>
    <property type="evidence" value="ECO:0007669"/>
    <property type="project" value="TreeGrafter"/>
</dbReference>
<dbReference type="GO" id="GO:0042128">
    <property type="term" value="P:nitrate assimilation"/>
    <property type="evidence" value="ECO:0007669"/>
    <property type="project" value="UniProtKB-UniRule"/>
</dbReference>
<dbReference type="CDD" id="cd00548">
    <property type="entry name" value="NrfA-like"/>
    <property type="match status" value="1"/>
</dbReference>
<dbReference type="FunFam" id="1.10.1130.10:FF:000002">
    <property type="entry name" value="Cytochrome c-552"/>
    <property type="match status" value="1"/>
</dbReference>
<dbReference type="FunFam" id="1.20.140.10:FF:000014">
    <property type="entry name" value="Cytochrome c-552"/>
    <property type="match status" value="1"/>
</dbReference>
<dbReference type="Gene3D" id="1.20.140.10">
    <property type="entry name" value="Butyryl-CoA Dehydrogenase, subunit A, domain 3"/>
    <property type="match status" value="1"/>
</dbReference>
<dbReference type="Gene3D" id="1.10.1130.10">
    <property type="entry name" value="Flavocytochrome C3, Chain A"/>
    <property type="match status" value="1"/>
</dbReference>
<dbReference type="HAMAP" id="MF_01182">
    <property type="entry name" value="Cytochrom_C552"/>
    <property type="match status" value="1"/>
</dbReference>
<dbReference type="InterPro" id="IPR003321">
    <property type="entry name" value="Cyt_c552"/>
</dbReference>
<dbReference type="InterPro" id="IPR017570">
    <property type="entry name" value="Cyt_c_NO2Rdtase_formate-dep"/>
</dbReference>
<dbReference type="InterPro" id="IPR036280">
    <property type="entry name" value="Multihaem_cyt_sf"/>
</dbReference>
<dbReference type="NCBIfam" id="TIGR03152">
    <property type="entry name" value="cyto_c552_HCOOH"/>
    <property type="match status" value="1"/>
</dbReference>
<dbReference type="NCBIfam" id="NF008339">
    <property type="entry name" value="PRK11125.1"/>
    <property type="match status" value="1"/>
</dbReference>
<dbReference type="PANTHER" id="PTHR30633:SF0">
    <property type="entry name" value="CYTOCHROME C-552"/>
    <property type="match status" value="1"/>
</dbReference>
<dbReference type="PANTHER" id="PTHR30633">
    <property type="entry name" value="CYTOCHROME C-552 RESPIRATORY NITRITE REDUCTASE"/>
    <property type="match status" value="1"/>
</dbReference>
<dbReference type="Pfam" id="PF02335">
    <property type="entry name" value="Cytochrom_C552"/>
    <property type="match status" value="1"/>
</dbReference>
<dbReference type="PIRSF" id="PIRSF000243">
    <property type="entry name" value="Cyt_c552"/>
    <property type="match status" value="1"/>
</dbReference>
<dbReference type="SUPFAM" id="SSF48695">
    <property type="entry name" value="Multiheme cytochromes"/>
    <property type="match status" value="1"/>
</dbReference>
<dbReference type="PROSITE" id="PS51008">
    <property type="entry name" value="MULTIHEME_CYTC"/>
    <property type="match status" value="1"/>
</dbReference>
<feature type="signal peptide" evidence="1">
    <location>
        <begin position="1"/>
        <end position="55"/>
    </location>
</feature>
<feature type="chain" id="PRO_0000268967" description="Cytochrome c-552">
    <location>
        <begin position="56"/>
        <end position="538"/>
    </location>
</feature>
<feature type="binding site" description="axial binding residue" evidence="1">
    <location>
        <position position="133"/>
    </location>
    <ligand>
        <name>heme c</name>
        <dbReference type="ChEBI" id="CHEBI:61717"/>
        <label>3</label>
    </ligand>
    <ligandPart>
        <name>Fe</name>
        <dbReference type="ChEBI" id="CHEBI:18248"/>
    </ligandPart>
</feature>
<feature type="binding site" description="covalent" evidence="1">
    <location>
        <position position="161"/>
    </location>
    <ligand>
        <name>heme</name>
        <dbReference type="ChEBI" id="CHEBI:30413"/>
        <label>1</label>
    </ligand>
</feature>
<feature type="binding site" description="covalent" evidence="1">
    <location>
        <position position="164"/>
    </location>
    <ligand>
        <name>heme</name>
        <dbReference type="ChEBI" id="CHEBI:30413"/>
        <label>1</label>
    </ligand>
</feature>
<feature type="binding site" description="axial binding residue" evidence="1">
    <location>
        <position position="165"/>
    </location>
    <ligand>
        <name>heme</name>
        <dbReference type="ChEBI" id="CHEBI:30413"/>
        <label>1</label>
    </ligand>
    <ligandPart>
        <name>Fe</name>
        <dbReference type="ChEBI" id="CHEBI:18248"/>
    </ligandPart>
</feature>
<feature type="binding site" description="covalent" evidence="1">
    <location>
        <position position="199"/>
    </location>
    <ligand>
        <name>heme c</name>
        <dbReference type="ChEBI" id="CHEBI:61717"/>
        <label>2</label>
    </ligand>
</feature>
<feature type="binding site" description="covalent" evidence="1">
    <location>
        <position position="202"/>
    </location>
    <ligand>
        <name>heme c</name>
        <dbReference type="ChEBI" id="CHEBI:61717"/>
        <label>2</label>
    </ligand>
</feature>
<feature type="binding site" description="axial binding residue" evidence="1">
    <location>
        <position position="203"/>
    </location>
    <ligand>
        <name>heme c</name>
        <dbReference type="ChEBI" id="CHEBI:61717"/>
        <label>2</label>
    </ligand>
    <ligandPart>
        <name>Fe</name>
        <dbReference type="ChEBI" id="CHEBI:18248"/>
    </ligandPart>
</feature>
<feature type="binding site" description="covalent" evidence="1">
    <location>
        <position position="264"/>
    </location>
    <ligand>
        <name>heme c</name>
        <dbReference type="ChEBI" id="CHEBI:61717"/>
        <label>3</label>
    </ligand>
</feature>
<feature type="binding site" description="covalent" evidence="1">
    <location>
        <position position="267"/>
    </location>
    <ligand>
        <name>heme c</name>
        <dbReference type="ChEBI" id="CHEBI:61717"/>
        <label>3</label>
    </ligand>
</feature>
<feature type="binding site" description="axial binding residue" evidence="1">
    <location>
        <position position="268"/>
    </location>
    <ligand>
        <name>heme c</name>
        <dbReference type="ChEBI" id="CHEBI:61717"/>
        <label>3</label>
    </ligand>
    <ligandPart>
        <name>Fe</name>
        <dbReference type="ChEBI" id="CHEBI:18248"/>
    </ligandPart>
</feature>
<feature type="binding site" evidence="1">
    <location>
        <position position="270"/>
    </location>
    <ligand>
        <name>Ca(2+)</name>
        <dbReference type="ChEBI" id="CHEBI:29108"/>
    </ligand>
</feature>
<feature type="binding site" evidence="1">
    <location>
        <position position="271"/>
    </location>
    <ligand>
        <name>Ca(2+)</name>
        <dbReference type="ChEBI" id="CHEBI:29108"/>
    </ligand>
</feature>
<feature type="binding site" evidence="1">
    <location>
        <position position="271"/>
    </location>
    <ligand>
        <name>substrate</name>
    </ligand>
</feature>
<feature type="binding site" evidence="1">
    <location>
        <position position="316"/>
    </location>
    <ligand>
        <name>Ca(2+)</name>
        <dbReference type="ChEBI" id="CHEBI:29108"/>
    </ligand>
</feature>
<feature type="binding site" evidence="1">
    <location>
        <position position="318"/>
    </location>
    <ligand>
        <name>Ca(2+)</name>
        <dbReference type="ChEBI" id="CHEBI:29108"/>
    </ligand>
</feature>
<feature type="binding site" evidence="1">
    <location>
        <position position="319"/>
    </location>
    <ligand>
        <name>substrate</name>
    </ligand>
</feature>
<feature type="binding site" description="axial binding residue" evidence="1">
    <location>
        <position position="330"/>
    </location>
    <ligand>
        <name>heme c</name>
        <dbReference type="ChEBI" id="CHEBI:61717"/>
        <label>5</label>
    </ligand>
    <ligandPart>
        <name>Fe</name>
        <dbReference type="ChEBI" id="CHEBI:18248"/>
    </ligandPart>
</feature>
<feature type="binding site" description="covalent" evidence="1">
    <location>
        <position position="337"/>
    </location>
    <ligand>
        <name>heme c</name>
        <dbReference type="ChEBI" id="CHEBI:61717"/>
        <label>4</label>
    </ligand>
</feature>
<feature type="binding site" description="covalent" evidence="1">
    <location>
        <position position="340"/>
    </location>
    <ligand>
        <name>heme c</name>
        <dbReference type="ChEBI" id="CHEBI:61717"/>
        <label>4</label>
    </ligand>
</feature>
<feature type="binding site" description="axial binding residue" evidence="1">
    <location>
        <position position="341"/>
    </location>
    <ligand>
        <name>heme c</name>
        <dbReference type="ChEBI" id="CHEBI:61717"/>
        <label>4</label>
    </ligand>
    <ligandPart>
        <name>Fe</name>
        <dbReference type="ChEBI" id="CHEBI:18248"/>
    </ligandPart>
</feature>
<feature type="binding site" description="axial binding residue" evidence="1">
    <location>
        <position position="356"/>
    </location>
    <ligand>
        <name>heme c</name>
        <dbReference type="ChEBI" id="CHEBI:61717"/>
        <label>2</label>
    </ligand>
    <ligandPart>
        <name>Fe</name>
        <dbReference type="ChEBI" id="CHEBI:18248"/>
    </ligandPart>
</feature>
<feature type="binding site" description="covalent" evidence="1">
    <location>
        <position position="369"/>
    </location>
    <ligand>
        <name>heme c</name>
        <dbReference type="ChEBI" id="CHEBI:61717"/>
        <label>5</label>
    </ligand>
</feature>
<feature type="binding site" description="covalent" evidence="1">
    <location>
        <position position="372"/>
    </location>
    <ligand>
        <name>heme c</name>
        <dbReference type="ChEBI" id="CHEBI:61717"/>
        <label>5</label>
    </ligand>
</feature>
<feature type="binding site" description="axial binding residue" evidence="1">
    <location>
        <position position="373"/>
    </location>
    <ligand>
        <name>heme c</name>
        <dbReference type="ChEBI" id="CHEBI:61717"/>
        <label>5</label>
    </ligand>
    <ligandPart>
        <name>Fe</name>
        <dbReference type="ChEBI" id="CHEBI:18248"/>
    </ligandPart>
</feature>
<feature type="binding site" description="axial binding residue" evidence="1">
    <location>
        <position position="448"/>
    </location>
    <ligand>
        <name>heme c</name>
        <dbReference type="ChEBI" id="CHEBI:61717"/>
        <label>4</label>
    </ligand>
    <ligandPart>
        <name>Fe</name>
        <dbReference type="ChEBI" id="CHEBI:18248"/>
    </ligandPart>
</feature>
<evidence type="ECO:0000255" key="1">
    <source>
        <dbReference type="HAMAP-Rule" id="MF_01182"/>
    </source>
</evidence>
<accession>Q4QLL8</accession>
<sequence>MKIYLRFVWILIIILNFLLNLFITTNGVIIVNAFKKSLIVAASFASLSLFNSATAELVYKPLEQPVEPAKPDLKIESVNEKFAEKYPNQYNSWRSTANGDGENIIYADEENPRLIVLWGGYAFAKEYNAPRGHFYAVTDVRNILRTGAPKTANDGPQAMACWTCKGPDVPRLIAEWGEKDYFNAKWAKGGPEIVNSIGCADCHDTTSKDFAEGKPALRIARPHVLRALDALEKATAEKDKAEGRPHNNLSFNTAARTEKRAEICANCHVEYYFAGDIKQVTFPWDNGQTADDIEKYYDDIGFTDWTHSLSKAPMLKAQHPDFEIWSLGMHGKNGVTCVDCHMPKVQGADGKVYTDHQIQNPFDAFDHTCANCHDQSKEKLRDIVTSRKKEVKDVMGRLEDQVVKSHFEAKAAWDAGATKEEMEAALMDIRHAQWRWDYTAASHGGHMHAPEVVLRVLASGLDKVADARTKLAVILTKHGVKTPVQIPDISTADKAWKVMGIDIEKERKAKEEFLKTVVPQWEQQAREKGLLVDPPAQK</sequence>
<reference key="1">
    <citation type="journal article" date="2005" name="J. Bacteriol.">
        <title>Genomic sequence of an otitis media isolate of nontypeable Haemophilus influenzae: comparative study with H. influenzae serotype d, strain KW20.</title>
        <authorList>
            <person name="Harrison A."/>
            <person name="Dyer D.W."/>
            <person name="Gillaspy A."/>
            <person name="Ray W.C."/>
            <person name="Mungur R."/>
            <person name="Carson M.B."/>
            <person name="Zhong H."/>
            <person name="Gipson J."/>
            <person name="Gipson M."/>
            <person name="Johnson L.S."/>
            <person name="Lewis L."/>
            <person name="Bakaletz L.O."/>
            <person name="Munson R.S. Jr."/>
        </authorList>
    </citation>
    <scope>NUCLEOTIDE SEQUENCE [LARGE SCALE GENOMIC DNA]</scope>
    <source>
        <strain>86-028NP</strain>
    </source>
</reference>
<proteinExistence type="inferred from homology"/>